<proteinExistence type="inferred from homology"/>
<feature type="chain" id="PRO_1000137877" description="tRNA(Ile)-lysidine synthase">
    <location>
        <begin position="1"/>
        <end position="454"/>
    </location>
</feature>
<feature type="binding site" evidence="1">
    <location>
        <begin position="31"/>
        <end position="36"/>
    </location>
    <ligand>
        <name>ATP</name>
        <dbReference type="ChEBI" id="CHEBI:30616"/>
    </ligand>
</feature>
<reference key="1">
    <citation type="journal article" date="2008" name="DNA Res.">
        <title>Determination of the genome sequence of Porphyromonas gingivalis strain ATCC 33277 and genomic comparison with strain W83 revealed extensive genome rearrangements in P. gingivalis.</title>
        <authorList>
            <person name="Naito M."/>
            <person name="Hirakawa H."/>
            <person name="Yamashita A."/>
            <person name="Ohara N."/>
            <person name="Shoji M."/>
            <person name="Yukitake H."/>
            <person name="Nakayama K."/>
            <person name="Toh H."/>
            <person name="Yoshimura F."/>
            <person name="Kuhara S."/>
            <person name="Hattori M."/>
            <person name="Hayashi T."/>
            <person name="Nakayama K."/>
        </authorList>
    </citation>
    <scope>NUCLEOTIDE SEQUENCE [LARGE SCALE GENOMIC DNA]</scope>
    <source>
        <strain>ATCC 33277 / DSM 20709 / CIP 103683 / JCM 12257 / NCTC 11834 / 2561</strain>
    </source>
</reference>
<comment type="function">
    <text evidence="1">Ligates lysine onto the cytidine present at position 34 of the AUA codon-specific tRNA(Ile) that contains the anticodon CAU, in an ATP-dependent manner. Cytidine is converted to lysidine, thus changing the amino acid specificity of the tRNA from methionine to isoleucine.</text>
</comment>
<comment type="catalytic activity">
    <reaction evidence="1">
        <text>cytidine(34) in tRNA(Ile2) + L-lysine + ATP = lysidine(34) in tRNA(Ile2) + AMP + diphosphate + H(+)</text>
        <dbReference type="Rhea" id="RHEA:43744"/>
        <dbReference type="Rhea" id="RHEA-COMP:10625"/>
        <dbReference type="Rhea" id="RHEA-COMP:10670"/>
        <dbReference type="ChEBI" id="CHEBI:15378"/>
        <dbReference type="ChEBI" id="CHEBI:30616"/>
        <dbReference type="ChEBI" id="CHEBI:32551"/>
        <dbReference type="ChEBI" id="CHEBI:33019"/>
        <dbReference type="ChEBI" id="CHEBI:82748"/>
        <dbReference type="ChEBI" id="CHEBI:83665"/>
        <dbReference type="ChEBI" id="CHEBI:456215"/>
        <dbReference type="EC" id="6.3.4.19"/>
    </reaction>
</comment>
<comment type="subcellular location">
    <subcellularLocation>
        <location evidence="1">Cytoplasm</location>
    </subcellularLocation>
</comment>
<comment type="domain">
    <text>The N-terminal region contains the highly conserved SGGXDS motif, predicted to be a P-loop motif involved in ATP binding.</text>
</comment>
<comment type="similarity">
    <text evidence="1">Belongs to the tRNA(Ile)-lysidine synthase family.</text>
</comment>
<sequence length="454" mass="52089">MKISLTNRVRTTIRERKLFREGNRLVLVALSGGADSVALLCVLRELGYETVAAHCNFHLRGVESDEDAAFVEGLCRDLDVPLHRIDFDTVRYARERSISIEMAARELRYEWFGLLRKELAIEYVAVAHHADDNAETMVLNLCRGTGISGLCGMPYKRNDGIVRPLLDATRDEIEAYLLDQKITYRTDSSNEDTRFRRNLVRHRIMPLLKELNPSLQEALLRTRENLEGVAAFFSKATEDFHNTLRATASISIREVKETPAPFTLLYDLLHPYGFNRDQIREVVTSLDNPPGASFFSSSHRLLRERDRLTVLPLSPKMEVPELFGLKIGDSFLDLPDGKQLSWQRGTPADLDLEGLRLPNTKLLLPLAFVESLQEELGVRRPQRGDHIHPYGMKGCKTVSRFFIDRHVPRRRREEAWLLCQGTEVVWIMGYAADRRFAIDELSDTEEYLLFSFEL</sequence>
<dbReference type="EC" id="6.3.4.19" evidence="1"/>
<dbReference type="EMBL" id="AP009380">
    <property type="protein sequence ID" value="BAG34509.1"/>
    <property type="molecule type" value="Genomic_DNA"/>
</dbReference>
<dbReference type="RefSeq" id="WP_012458669.1">
    <property type="nucleotide sequence ID" value="NC_010729.1"/>
</dbReference>
<dbReference type="SMR" id="B2RMB4"/>
<dbReference type="GeneID" id="29257128"/>
<dbReference type="KEGG" id="pgn:PGN_1991"/>
<dbReference type="eggNOG" id="COG0037">
    <property type="taxonomic scope" value="Bacteria"/>
</dbReference>
<dbReference type="HOGENOM" id="CLU_018869_0_1_10"/>
<dbReference type="OrthoDB" id="9807403at2"/>
<dbReference type="BioCyc" id="PGIN431947:G1G2V-2226-MONOMER"/>
<dbReference type="Proteomes" id="UP000008842">
    <property type="component" value="Chromosome"/>
</dbReference>
<dbReference type="GO" id="GO:0005737">
    <property type="term" value="C:cytoplasm"/>
    <property type="evidence" value="ECO:0007669"/>
    <property type="project" value="UniProtKB-SubCell"/>
</dbReference>
<dbReference type="GO" id="GO:0005524">
    <property type="term" value="F:ATP binding"/>
    <property type="evidence" value="ECO:0007669"/>
    <property type="project" value="UniProtKB-UniRule"/>
</dbReference>
<dbReference type="GO" id="GO:0032267">
    <property type="term" value="F:tRNA(Ile)-lysidine synthase activity"/>
    <property type="evidence" value="ECO:0007669"/>
    <property type="project" value="UniProtKB-EC"/>
</dbReference>
<dbReference type="GO" id="GO:0006400">
    <property type="term" value="P:tRNA modification"/>
    <property type="evidence" value="ECO:0007669"/>
    <property type="project" value="UniProtKB-UniRule"/>
</dbReference>
<dbReference type="CDD" id="cd01992">
    <property type="entry name" value="TilS_N"/>
    <property type="match status" value="1"/>
</dbReference>
<dbReference type="Gene3D" id="3.40.50.620">
    <property type="entry name" value="HUPs"/>
    <property type="match status" value="1"/>
</dbReference>
<dbReference type="HAMAP" id="MF_01161">
    <property type="entry name" value="tRNA_Ile_lys_synt"/>
    <property type="match status" value="1"/>
</dbReference>
<dbReference type="InterPro" id="IPR012796">
    <property type="entry name" value="Lysidine-tRNA-synth_C"/>
</dbReference>
<dbReference type="InterPro" id="IPR014729">
    <property type="entry name" value="Rossmann-like_a/b/a_fold"/>
</dbReference>
<dbReference type="InterPro" id="IPR011063">
    <property type="entry name" value="TilS/TtcA_N"/>
</dbReference>
<dbReference type="InterPro" id="IPR012094">
    <property type="entry name" value="tRNA_Ile_lys_synt"/>
</dbReference>
<dbReference type="InterPro" id="IPR012795">
    <property type="entry name" value="tRNA_Ile_lys_synt_N"/>
</dbReference>
<dbReference type="NCBIfam" id="TIGR02433">
    <property type="entry name" value="lysidine_TilS_C"/>
    <property type="match status" value="1"/>
</dbReference>
<dbReference type="NCBIfam" id="TIGR02432">
    <property type="entry name" value="lysidine_TilS_N"/>
    <property type="match status" value="1"/>
</dbReference>
<dbReference type="PANTHER" id="PTHR43033">
    <property type="entry name" value="TRNA(ILE)-LYSIDINE SYNTHASE-RELATED"/>
    <property type="match status" value="1"/>
</dbReference>
<dbReference type="PANTHER" id="PTHR43033:SF1">
    <property type="entry name" value="TRNA(ILE)-LYSIDINE SYNTHASE-RELATED"/>
    <property type="match status" value="1"/>
</dbReference>
<dbReference type="Pfam" id="PF01171">
    <property type="entry name" value="ATP_bind_3"/>
    <property type="match status" value="1"/>
</dbReference>
<dbReference type="Pfam" id="PF11734">
    <property type="entry name" value="TilS_C"/>
    <property type="match status" value="1"/>
</dbReference>
<dbReference type="SMART" id="SM00977">
    <property type="entry name" value="TilS_C"/>
    <property type="match status" value="1"/>
</dbReference>
<dbReference type="SUPFAM" id="SSF52402">
    <property type="entry name" value="Adenine nucleotide alpha hydrolases-like"/>
    <property type="match status" value="1"/>
</dbReference>
<dbReference type="SUPFAM" id="SSF56037">
    <property type="entry name" value="PheT/TilS domain"/>
    <property type="match status" value="1"/>
</dbReference>
<protein>
    <recommendedName>
        <fullName evidence="1">tRNA(Ile)-lysidine synthase</fullName>
        <ecNumber evidence="1">6.3.4.19</ecNumber>
    </recommendedName>
    <alternativeName>
        <fullName evidence="1">tRNA(Ile)-2-lysyl-cytidine synthase</fullName>
    </alternativeName>
    <alternativeName>
        <fullName evidence="1">tRNA(Ile)-lysidine synthetase</fullName>
    </alternativeName>
</protein>
<organism>
    <name type="scientific">Porphyromonas gingivalis (strain ATCC 33277 / DSM 20709 / CIP 103683 / JCM 12257 / NCTC 11834 / 2561)</name>
    <dbReference type="NCBI Taxonomy" id="431947"/>
    <lineage>
        <taxon>Bacteria</taxon>
        <taxon>Pseudomonadati</taxon>
        <taxon>Bacteroidota</taxon>
        <taxon>Bacteroidia</taxon>
        <taxon>Bacteroidales</taxon>
        <taxon>Porphyromonadaceae</taxon>
        <taxon>Porphyromonas</taxon>
    </lineage>
</organism>
<accession>B2RMB4</accession>
<gene>
    <name evidence="1" type="primary">tilS</name>
    <name type="ordered locus">PGN_1991</name>
</gene>
<name>TILS_PORG3</name>
<evidence type="ECO:0000255" key="1">
    <source>
        <dbReference type="HAMAP-Rule" id="MF_01161"/>
    </source>
</evidence>
<keyword id="KW-0067">ATP-binding</keyword>
<keyword id="KW-0963">Cytoplasm</keyword>
<keyword id="KW-0436">Ligase</keyword>
<keyword id="KW-0547">Nucleotide-binding</keyword>
<keyword id="KW-0819">tRNA processing</keyword>